<organism>
    <name type="scientific">Stutzerimonas stutzeri (strain A1501)</name>
    <name type="common">Pseudomonas stutzeri</name>
    <dbReference type="NCBI Taxonomy" id="379731"/>
    <lineage>
        <taxon>Bacteria</taxon>
        <taxon>Pseudomonadati</taxon>
        <taxon>Pseudomonadota</taxon>
        <taxon>Gammaproteobacteria</taxon>
        <taxon>Pseudomonadales</taxon>
        <taxon>Pseudomonadaceae</taxon>
        <taxon>Stutzerimonas</taxon>
    </lineage>
</organism>
<reference key="1">
    <citation type="journal article" date="2008" name="Proc. Natl. Acad. Sci. U.S.A.">
        <title>Nitrogen fixation island and rhizosphere competence traits in the genome of root-associated Pseudomonas stutzeri A1501.</title>
        <authorList>
            <person name="Yan Y."/>
            <person name="Yang J."/>
            <person name="Dou Y."/>
            <person name="Chen M."/>
            <person name="Ping S."/>
            <person name="Peng J."/>
            <person name="Lu W."/>
            <person name="Zhang W."/>
            <person name="Yao Z."/>
            <person name="Li H."/>
            <person name="Liu W."/>
            <person name="He S."/>
            <person name="Geng L."/>
            <person name="Zhang X."/>
            <person name="Yang F."/>
            <person name="Yu H."/>
            <person name="Zhan Y."/>
            <person name="Li D."/>
            <person name="Lin Z."/>
            <person name="Wang Y."/>
            <person name="Elmerich C."/>
            <person name="Lin M."/>
            <person name="Jin Q."/>
        </authorList>
    </citation>
    <scope>NUCLEOTIDE SEQUENCE [LARGE SCALE GENOMIC DNA]</scope>
    <source>
        <strain>A1501</strain>
    </source>
</reference>
<comment type="function">
    <text evidence="1">Catalyzes the phosphorylation of D-glycero-D-manno-heptose 7-phosphate at the C-1 position to selectively form D-glycero-beta-D-manno-heptose-1,7-bisphosphate.</text>
</comment>
<comment type="function">
    <text evidence="1">Catalyzes the ADP transfer from ATP to D-glycero-beta-D-manno-heptose 1-phosphate, yielding ADP-D-glycero-beta-D-manno-heptose.</text>
</comment>
<comment type="catalytic activity">
    <reaction evidence="1">
        <text>D-glycero-beta-D-manno-heptose 7-phosphate + ATP = D-glycero-beta-D-manno-heptose 1,7-bisphosphate + ADP + H(+)</text>
        <dbReference type="Rhea" id="RHEA:27473"/>
        <dbReference type="ChEBI" id="CHEBI:15378"/>
        <dbReference type="ChEBI" id="CHEBI:30616"/>
        <dbReference type="ChEBI" id="CHEBI:60204"/>
        <dbReference type="ChEBI" id="CHEBI:60208"/>
        <dbReference type="ChEBI" id="CHEBI:456216"/>
        <dbReference type="EC" id="2.7.1.167"/>
    </reaction>
</comment>
<comment type="catalytic activity">
    <reaction evidence="1">
        <text>D-glycero-beta-D-manno-heptose 1-phosphate + ATP + H(+) = ADP-D-glycero-beta-D-manno-heptose + diphosphate</text>
        <dbReference type="Rhea" id="RHEA:27465"/>
        <dbReference type="ChEBI" id="CHEBI:15378"/>
        <dbReference type="ChEBI" id="CHEBI:30616"/>
        <dbReference type="ChEBI" id="CHEBI:33019"/>
        <dbReference type="ChEBI" id="CHEBI:59967"/>
        <dbReference type="ChEBI" id="CHEBI:61593"/>
        <dbReference type="EC" id="2.7.7.70"/>
    </reaction>
</comment>
<comment type="pathway">
    <text evidence="1">Nucleotide-sugar biosynthesis; ADP-L-glycero-beta-D-manno-heptose biosynthesis; ADP-L-glycero-beta-D-manno-heptose from D-glycero-beta-D-manno-heptose 7-phosphate: step 1/4.</text>
</comment>
<comment type="pathway">
    <text evidence="1">Nucleotide-sugar biosynthesis; ADP-L-glycero-beta-D-manno-heptose biosynthesis; ADP-L-glycero-beta-D-manno-heptose from D-glycero-beta-D-manno-heptose 7-phosphate: step 3/4.</text>
</comment>
<comment type="subunit">
    <text evidence="1">Homodimer.</text>
</comment>
<comment type="similarity">
    <text evidence="1">In the N-terminal section; belongs to the carbohydrate kinase PfkB family.</text>
</comment>
<comment type="similarity">
    <text evidence="1">In the C-terminal section; belongs to the cytidylyltransferase family.</text>
</comment>
<accession>A4VR47</accession>
<proteinExistence type="inferred from homology"/>
<evidence type="ECO:0000255" key="1">
    <source>
        <dbReference type="HAMAP-Rule" id="MF_01603"/>
    </source>
</evidence>
<feature type="chain" id="PRO_1000069402" description="Bifunctional protein HldE">
    <location>
        <begin position="1"/>
        <end position="473"/>
    </location>
</feature>
<feature type="region of interest" description="Ribokinase">
    <location>
        <begin position="1"/>
        <end position="318"/>
    </location>
</feature>
<feature type="region of interest" description="Cytidylyltransferase">
    <location>
        <begin position="343"/>
        <end position="473"/>
    </location>
</feature>
<feature type="active site" evidence="1">
    <location>
        <position position="263"/>
    </location>
</feature>
<feature type="binding site" evidence="1">
    <location>
        <begin position="194"/>
        <end position="197"/>
    </location>
    <ligand>
        <name>ATP</name>
        <dbReference type="ChEBI" id="CHEBI:30616"/>
    </ligand>
</feature>
<name>HLDE_STUS1</name>
<keyword id="KW-0067">ATP-binding</keyword>
<keyword id="KW-0119">Carbohydrate metabolism</keyword>
<keyword id="KW-0418">Kinase</keyword>
<keyword id="KW-0511">Multifunctional enzyme</keyword>
<keyword id="KW-0547">Nucleotide-binding</keyword>
<keyword id="KW-0548">Nucleotidyltransferase</keyword>
<keyword id="KW-1185">Reference proteome</keyword>
<keyword id="KW-0808">Transferase</keyword>
<dbReference type="EC" id="2.7.1.167" evidence="1"/>
<dbReference type="EC" id="2.7.7.70" evidence="1"/>
<dbReference type="EMBL" id="CP000304">
    <property type="protein sequence ID" value="ABP81448.1"/>
    <property type="molecule type" value="Genomic_DNA"/>
</dbReference>
<dbReference type="RefSeq" id="WP_011914833.1">
    <property type="nucleotide sequence ID" value="NC_009434.1"/>
</dbReference>
<dbReference type="SMR" id="A4VR47"/>
<dbReference type="KEGG" id="psa:PST_3825"/>
<dbReference type="eggNOG" id="COG0615">
    <property type="taxonomic scope" value="Bacteria"/>
</dbReference>
<dbReference type="eggNOG" id="COG2870">
    <property type="taxonomic scope" value="Bacteria"/>
</dbReference>
<dbReference type="HOGENOM" id="CLU_021150_2_1_6"/>
<dbReference type="UniPathway" id="UPA00356">
    <property type="reaction ID" value="UER00437"/>
</dbReference>
<dbReference type="UniPathway" id="UPA00356">
    <property type="reaction ID" value="UER00439"/>
</dbReference>
<dbReference type="Proteomes" id="UP000000233">
    <property type="component" value="Chromosome"/>
</dbReference>
<dbReference type="GO" id="GO:0005829">
    <property type="term" value="C:cytosol"/>
    <property type="evidence" value="ECO:0007669"/>
    <property type="project" value="TreeGrafter"/>
</dbReference>
<dbReference type="GO" id="GO:0005524">
    <property type="term" value="F:ATP binding"/>
    <property type="evidence" value="ECO:0007669"/>
    <property type="project" value="UniProtKB-UniRule"/>
</dbReference>
<dbReference type="GO" id="GO:0033785">
    <property type="term" value="F:heptose 7-phosphate kinase activity"/>
    <property type="evidence" value="ECO:0007669"/>
    <property type="project" value="UniProtKB-UniRule"/>
</dbReference>
<dbReference type="GO" id="GO:0033786">
    <property type="term" value="F:heptose-1-phosphate adenylyltransferase activity"/>
    <property type="evidence" value="ECO:0007669"/>
    <property type="project" value="UniProtKB-UniRule"/>
</dbReference>
<dbReference type="GO" id="GO:0016773">
    <property type="term" value="F:phosphotransferase activity, alcohol group as acceptor"/>
    <property type="evidence" value="ECO:0007669"/>
    <property type="project" value="InterPro"/>
</dbReference>
<dbReference type="GO" id="GO:0097171">
    <property type="term" value="P:ADP-L-glycero-beta-D-manno-heptose biosynthetic process"/>
    <property type="evidence" value="ECO:0007669"/>
    <property type="project" value="UniProtKB-UniPathway"/>
</dbReference>
<dbReference type="CDD" id="cd01172">
    <property type="entry name" value="RfaE_like"/>
    <property type="match status" value="1"/>
</dbReference>
<dbReference type="FunFam" id="3.40.1190.20:FF:000002">
    <property type="entry name" value="Bifunctional protein HldE"/>
    <property type="match status" value="1"/>
</dbReference>
<dbReference type="FunFam" id="3.40.50.620:FF:000028">
    <property type="entry name" value="Bifunctional protein HldE"/>
    <property type="match status" value="1"/>
</dbReference>
<dbReference type="Gene3D" id="3.40.1190.20">
    <property type="match status" value="1"/>
</dbReference>
<dbReference type="Gene3D" id="3.40.50.620">
    <property type="entry name" value="HUPs"/>
    <property type="match status" value="1"/>
</dbReference>
<dbReference type="HAMAP" id="MF_01603">
    <property type="entry name" value="HldE"/>
    <property type="match status" value="1"/>
</dbReference>
<dbReference type="InterPro" id="IPR023030">
    <property type="entry name" value="Bifunc_HldE"/>
</dbReference>
<dbReference type="InterPro" id="IPR002173">
    <property type="entry name" value="Carboh/pur_kinase_PfkB_CS"/>
</dbReference>
<dbReference type="InterPro" id="IPR004821">
    <property type="entry name" value="Cyt_trans-like"/>
</dbReference>
<dbReference type="InterPro" id="IPR011611">
    <property type="entry name" value="PfkB_dom"/>
</dbReference>
<dbReference type="InterPro" id="IPR011913">
    <property type="entry name" value="RfaE_dom_I"/>
</dbReference>
<dbReference type="InterPro" id="IPR011914">
    <property type="entry name" value="RfaE_dom_II"/>
</dbReference>
<dbReference type="InterPro" id="IPR029056">
    <property type="entry name" value="Ribokinase-like"/>
</dbReference>
<dbReference type="InterPro" id="IPR014729">
    <property type="entry name" value="Rossmann-like_a/b/a_fold"/>
</dbReference>
<dbReference type="NCBIfam" id="TIGR00125">
    <property type="entry name" value="cyt_tran_rel"/>
    <property type="match status" value="1"/>
</dbReference>
<dbReference type="NCBIfam" id="NF008454">
    <property type="entry name" value="PRK11316.1"/>
    <property type="match status" value="1"/>
</dbReference>
<dbReference type="NCBIfam" id="TIGR02198">
    <property type="entry name" value="rfaE_dom_I"/>
    <property type="match status" value="1"/>
</dbReference>
<dbReference type="NCBIfam" id="TIGR02199">
    <property type="entry name" value="rfaE_dom_II"/>
    <property type="match status" value="1"/>
</dbReference>
<dbReference type="PANTHER" id="PTHR46969">
    <property type="entry name" value="BIFUNCTIONAL PROTEIN HLDE"/>
    <property type="match status" value="1"/>
</dbReference>
<dbReference type="PANTHER" id="PTHR46969:SF1">
    <property type="entry name" value="BIFUNCTIONAL PROTEIN HLDE"/>
    <property type="match status" value="1"/>
</dbReference>
<dbReference type="Pfam" id="PF01467">
    <property type="entry name" value="CTP_transf_like"/>
    <property type="match status" value="1"/>
</dbReference>
<dbReference type="Pfam" id="PF00294">
    <property type="entry name" value="PfkB"/>
    <property type="match status" value="1"/>
</dbReference>
<dbReference type="SUPFAM" id="SSF52374">
    <property type="entry name" value="Nucleotidylyl transferase"/>
    <property type="match status" value="1"/>
</dbReference>
<dbReference type="SUPFAM" id="SSF53613">
    <property type="entry name" value="Ribokinase-like"/>
    <property type="match status" value="1"/>
</dbReference>
<dbReference type="PROSITE" id="PS00583">
    <property type="entry name" value="PFKB_KINASES_1"/>
    <property type="match status" value="1"/>
</dbReference>
<protein>
    <recommendedName>
        <fullName evidence="1">Bifunctional protein HldE</fullName>
    </recommendedName>
    <domain>
        <recommendedName>
            <fullName evidence="1">D-beta-D-heptose 7-phosphate kinase</fullName>
            <ecNumber evidence="1">2.7.1.167</ecNumber>
        </recommendedName>
        <alternativeName>
            <fullName evidence="1">D-beta-D-heptose 7-phosphotransferase</fullName>
        </alternativeName>
        <alternativeName>
            <fullName evidence="1">D-glycero-beta-D-manno-heptose-7-phosphate kinase</fullName>
        </alternativeName>
    </domain>
    <domain>
        <recommendedName>
            <fullName evidence="1">D-beta-D-heptose 1-phosphate adenylyltransferase</fullName>
            <ecNumber evidence="1">2.7.7.70</ecNumber>
        </recommendedName>
        <alternativeName>
            <fullName evidence="1">D-glycero-beta-D-manno-heptose 1-phosphate adenylyltransferase</fullName>
        </alternativeName>
    </domain>
</protein>
<sequence length="473" mass="50232">MKLSMPRFDQAPVLVVGDVMLDRYWHGGTSRISPEAPVPVVKVEQIEDRPGGAANVALNIAALGAPAALVGVTGEDEARQSLVDSLAAAGVRAHFQCLEHQPTIVKLRVMSRHQQLLRMDFEEPFDTDPAALLTDVESLLAGVKVLVLSDYGKGALKNHQALIQAARRHGIPVLADPKGKDFEIYRGASLITPNLGEFEAIVGHCADEAELVAKGAELMRQLELGALLVTRGEHGMTLLRPEHAPLHLPARAREVFDVTGAGDTVISTLAASLAAGEELPQAVALANLAAGIVVGKLGTAAISAPELRRAVQREEGSERGVMTVEQLLTVVEDARAQGEKIVFTNGCFDILHAGHVTYLEQARAQGDRLVVAVNDDGSVSRLKGPGRPINSVDRRMAVLAGLEAVDWVVCFAEDTPENLLAQVRPDVLVKGGDYGVDQVVGADLVKAYGGVVKVLGLVENSSTTAIVEKIRKA</sequence>
<gene>
    <name evidence="1" type="primary">hldE</name>
    <name type="ordered locus">PST_3825</name>
</gene>